<sequence>MGETVRFGISIDDKLLESFDRLIEQKGYMNRSEAVRDLIRAALVELKWEGGEEETVGTVTLVYNHHVRDLSDKLTEQQHSHHNEIVSALHVHLDAHNCLEVLVVRGKAREVKKIADELIGVKGVKHGKLVMTTTGEELH</sequence>
<evidence type="ECO:0000255" key="1">
    <source>
        <dbReference type="HAMAP-Rule" id="MF_00476"/>
    </source>
</evidence>
<name>NIKR_GEOMG</name>
<proteinExistence type="inferred from homology"/>
<keyword id="KW-0238">DNA-binding</keyword>
<keyword id="KW-0479">Metal-binding</keyword>
<keyword id="KW-0533">Nickel</keyword>
<keyword id="KW-1185">Reference proteome</keyword>
<keyword id="KW-0804">Transcription</keyword>
<keyword id="KW-0805">Transcription regulation</keyword>
<reference key="1">
    <citation type="journal article" date="2009" name="BMC Microbiol.">
        <title>The genome sequence of Geobacter metallireducens: features of metabolism, physiology and regulation common and dissimilar to Geobacter sulfurreducens.</title>
        <authorList>
            <person name="Aklujkar M."/>
            <person name="Krushkal J."/>
            <person name="DiBartolo G."/>
            <person name="Lapidus A."/>
            <person name="Land M.L."/>
            <person name="Lovley D.R."/>
        </authorList>
    </citation>
    <scope>NUCLEOTIDE SEQUENCE [LARGE SCALE GENOMIC DNA]</scope>
    <source>
        <strain>ATCC 53774 / DSM 7210 / GS-15</strain>
    </source>
</reference>
<dbReference type="EMBL" id="CP000148">
    <property type="protein sequence ID" value="ABB30737.1"/>
    <property type="molecule type" value="Genomic_DNA"/>
</dbReference>
<dbReference type="SMR" id="Q39YD7"/>
<dbReference type="STRING" id="269799.Gmet_0494"/>
<dbReference type="KEGG" id="gme:Gmet_0494"/>
<dbReference type="eggNOG" id="COG0864">
    <property type="taxonomic scope" value="Bacteria"/>
</dbReference>
<dbReference type="HOGENOM" id="CLU_113319_1_2_7"/>
<dbReference type="Proteomes" id="UP000007073">
    <property type="component" value="Chromosome"/>
</dbReference>
<dbReference type="GO" id="GO:0003677">
    <property type="term" value="F:DNA binding"/>
    <property type="evidence" value="ECO:0007669"/>
    <property type="project" value="UniProtKB-KW"/>
</dbReference>
<dbReference type="GO" id="GO:0003700">
    <property type="term" value="F:DNA-binding transcription factor activity"/>
    <property type="evidence" value="ECO:0007669"/>
    <property type="project" value="UniProtKB-UniRule"/>
</dbReference>
<dbReference type="GO" id="GO:0016151">
    <property type="term" value="F:nickel cation binding"/>
    <property type="evidence" value="ECO:0007669"/>
    <property type="project" value="UniProtKB-UniRule"/>
</dbReference>
<dbReference type="GO" id="GO:0010045">
    <property type="term" value="P:response to nickel cation"/>
    <property type="evidence" value="ECO:0007669"/>
    <property type="project" value="InterPro"/>
</dbReference>
<dbReference type="CDD" id="cd22231">
    <property type="entry name" value="RHH_NikR_HicB-like"/>
    <property type="match status" value="1"/>
</dbReference>
<dbReference type="Gene3D" id="3.30.70.1150">
    <property type="entry name" value="ACT-like. Chain A, domain 2"/>
    <property type="match status" value="1"/>
</dbReference>
<dbReference type="Gene3D" id="1.10.1220.10">
    <property type="entry name" value="Met repressor-like"/>
    <property type="match status" value="1"/>
</dbReference>
<dbReference type="HAMAP" id="MF_00476">
    <property type="entry name" value="NikR"/>
    <property type="match status" value="1"/>
</dbReference>
<dbReference type="InterPro" id="IPR027271">
    <property type="entry name" value="Acetolactate_synth/TF_NikR_C"/>
</dbReference>
<dbReference type="InterPro" id="IPR045865">
    <property type="entry name" value="ACT-like_dom_sf"/>
</dbReference>
<dbReference type="InterPro" id="IPR013321">
    <property type="entry name" value="Arc_rbn_hlx_hlx"/>
</dbReference>
<dbReference type="InterPro" id="IPR002145">
    <property type="entry name" value="CopG"/>
</dbReference>
<dbReference type="InterPro" id="IPR050192">
    <property type="entry name" value="CopG/NikR_regulator"/>
</dbReference>
<dbReference type="InterPro" id="IPR022988">
    <property type="entry name" value="Ni_resp_reg_NikR"/>
</dbReference>
<dbReference type="InterPro" id="IPR010985">
    <property type="entry name" value="Ribbon_hlx_hlx"/>
</dbReference>
<dbReference type="InterPro" id="IPR014864">
    <property type="entry name" value="TF_NikR_Ni-bd_C"/>
</dbReference>
<dbReference type="NCBIfam" id="NF001884">
    <property type="entry name" value="PRK00630.1"/>
    <property type="match status" value="1"/>
</dbReference>
<dbReference type="NCBIfam" id="NF002169">
    <property type="entry name" value="PRK01002.1"/>
    <property type="match status" value="1"/>
</dbReference>
<dbReference type="NCBIfam" id="NF002815">
    <property type="entry name" value="PRK02967.1"/>
    <property type="match status" value="1"/>
</dbReference>
<dbReference type="NCBIfam" id="NF003381">
    <property type="entry name" value="PRK04460.1"/>
    <property type="match status" value="1"/>
</dbReference>
<dbReference type="PANTHER" id="PTHR34719">
    <property type="entry name" value="NICKEL-RESPONSIVE REGULATOR"/>
    <property type="match status" value="1"/>
</dbReference>
<dbReference type="PANTHER" id="PTHR34719:SF2">
    <property type="entry name" value="NICKEL-RESPONSIVE REGULATOR"/>
    <property type="match status" value="1"/>
</dbReference>
<dbReference type="Pfam" id="PF08753">
    <property type="entry name" value="NikR_C"/>
    <property type="match status" value="1"/>
</dbReference>
<dbReference type="Pfam" id="PF01402">
    <property type="entry name" value="RHH_1"/>
    <property type="match status" value="1"/>
</dbReference>
<dbReference type="SUPFAM" id="SSF55021">
    <property type="entry name" value="ACT-like"/>
    <property type="match status" value="1"/>
</dbReference>
<dbReference type="SUPFAM" id="SSF47598">
    <property type="entry name" value="Ribbon-helix-helix"/>
    <property type="match status" value="1"/>
</dbReference>
<protein>
    <recommendedName>
        <fullName evidence="1">Putative nickel-responsive regulator</fullName>
    </recommendedName>
</protein>
<organism>
    <name type="scientific">Geobacter metallireducens (strain ATCC 53774 / DSM 7210 / GS-15)</name>
    <dbReference type="NCBI Taxonomy" id="269799"/>
    <lineage>
        <taxon>Bacteria</taxon>
        <taxon>Pseudomonadati</taxon>
        <taxon>Thermodesulfobacteriota</taxon>
        <taxon>Desulfuromonadia</taxon>
        <taxon>Geobacterales</taxon>
        <taxon>Geobacteraceae</taxon>
        <taxon>Geobacter</taxon>
    </lineage>
</organism>
<accession>Q39YD7</accession>
<gene>
    <name type="ordered locus">Gmet_0494</name>
</gene>
<comment type="function">
    <text evidence="1">Transcriptional regulator.</text>
</comment>
<comment type="cofactor">
    <cofactor evidence="1">
        <name>Ni(2+)</name>
        <dbReference type="ChEBI" id="CHEBI:49786"/>
    </cofactor>
    <text evidence="1">Binds 1 nickel ion per subunit.</text>
</comment>
<comment type="similarity">
    <text evidence="1">Belongs to the transcriptional regulatory CopG/NikR family.</text>
</comment>
<feature type="chain" id="PRO_1000014066" description="Putative nickel-responsive regulator">
    <location>
        <begin position="1"/>
        <end position="139"/>
    </location>
</feature>
<feature type="binding site" evidence="1">
    <location>
        <position position="79"/>
    </location>
    <ligand>
        <name>Ni(2+)</name>
        <dbReference type="ChEBI" id="CHEBI:49786"/>
    </ligand>
</feature>
<feature type="binding site" evidence="1">
    <location>
        <position position="90"/>
    </location>
    <ligand>
        <name>Ni(2+)</name>
        <dbReference type="ChEBI" id="CHEBI:49786"/>
    </ligand>
</feature>
<feature type="binding site" evidence="1">
    <location>
        <position position="92"/>
    </location>
    <ligand>
        <name>Ni(2+)</name>
        <dbReference type="ChEBI" id="CHEBI:49786"/>
    </ligand>
</feature>
<feature type="binding site" evidence="1">
    <location>
        <position position="98"/>
    </location>
    <ligand>
        <name>Ni(2+)</name>
        <dbReference type="ChEBI" id="CHEBI:49786"/>
    </ligand>
</feature>